<feature type="chain" id="PRO_1000099505" description="UvrABC system protein C">
    <location>
        <begin position="1"/>
        <end position="574"/>
    </location>
</feature>
<feature type="domain" description="GIY-YIG" evidence="1">
    <location>
        <begin position="12"/>
        <end position="92"/>
    </location>
</feature>
<feature type="domain" description="UVR" evidence="1">
    <location>
        <begin position="200"/>
        <end position="235"/>
    </location>
</feature>
<dbReference type="EMBL" id="CP000879">
    <property type="protein sequence ID" value="ABX32543.1"/>
    <property type="molecule type" value="Genomic_DNA"/>
</dbReference>
<dbReference type="RefSeq" id="WP_012209640.1">
    <property type="nucleotide sequence ID" value="NC_010003.1"/>
</dbReference>
<dbReference type="SMR" id="A9BGW2"/>
<dbReference type="STRING" id="403833.Pmob_1854"/>
<dbReference type="KEGG" id="pmo:Pmob_1854"/>
<dbReference type="eggNOG" id="COG0322">
    <property type="taxonomic scope" value="Bacteria"/>
</dbReference>
<dbReference type="HOGENOM" id="CLU_014841_3_2_0"/>
<dbReference type="OrthoDB" id="9804933at2"/>
<dbReference type="Proteomes" id="UP000000789">
    <property type="component" value="Chromosome"/>
</dbReference>
<dbReference type="GO" id="GO:0005737">
    <property type="term" value="C:cytoplasm"/>
    <property type="evidence" value="ECO:0007669"/>
    <property type="project" value="UniProtKB-SubCell"/>
</dbReference>
<dbReference type="GO" id="GO:0009380">
    <property type="term" value="C:excinuclease repair complex"/>
    <property type="evidence" value="ECO:0007669"/>
    <property type="project" value="InterPro"/>
</dbReference>
<dbReference type="GO" id="GO:0003677">
    <property type="term" value="F:DNA binding"/>
    <property type="evidence" value="ECO:0007669"/>
    <property type="project" value="UniProtKB-UniRule"/>
</dbReference>
<dbReference type="GO" id="GO:0009381">
    <property type="term" value="F:excinuclease ABC activity"/>
    <property type="evidence" value="ECO:0007669"/>
    <property type="project" value="UniProtKB-UniRule"/>
</dbReference>
<dbReference type="GO" id="GO:0006289">
    <property type="term" value="P:nucleotide-excision repair"/>
    <property type="evidence" value="ECO:0007669"/>
    <property type="project" value="UniProtKB-UniRule"/>
</dbReference>
<dbReference type="GO" id="GO:0009432">
    <property type="term" value="P:SOS response"/>
    <property type="evidence" value="ECO:0007669"/>
    <property type="project" value="UniProtKB-UniRule"/>
</dbReference>
<dbReference type="CDD" id="cd10434">
    <property type="entry name" value="GIY-YIG_UvrC_Cho"/>
    <property type="match status" value="1"/>
</dbReference>
<dbReference type="FunFam" id="3.40.1440.10:FF:000001">
    <property type="entry name" value="UvrABC system protein C"/>
    <property type="match status" value="1"/>
</dbReference>
<dbReference type="Gene3D" id="1.10.150.20">
    <property type="entry name" value="5' to 3' exonuclease, C-terminal subdomain"/>
    <property type="match status" value="1"/>
</dbReference>
<dbReference type="Gene3D" id="3.40.1440.10">
    <property type="entry name" value="GIY-YIG endonuclease"/>
    <property type="match status" value="1"/>
</dbReference>
<dbReference type="Gene3D" id="4.10.860.10">
    <property type="entry name" value="UVR domain"/>
    <property type="match status" value="1"/>
</dbReference>
<dbReference type="Gene3D" id="3.30.420.340">
    <property type="entry name" value="UvrC, RNAse H endonuclease domain"/>
    <property type="match status" value="1"/>
</dbReference>
<dbReference type="HAMAP" id="MF_00203">
    <property type="entry name" value="UvrC"/>
    <property type="match status" value="1"/>
</dbReference>
<dbReference type="InterPro" id="IPR000305">
    <property type="entry name" value="GIY-YIG_endonuc"/>
</dbReference>
<dbReference type="InterPro" id="IPR035901">
    <property type="entry name" value="GIY-YIG_endonuc_sf"/>
</dbReference>
<dbReference type="InterPro" id="IPR047296">
    <property type="entry name" value="GIY-YIG_UvrC_Cho"/>
</dbReference>
<dbReference type="InterPro" id="IPR010994">
    <property type="entry name" value="RuvA_2-like"/>
</dbReference>
<dbReference type="InterPro" id="IPR001943">
    <property type="entry name" value="UVR_dom"/>
</dbReference>
<dbReference type="InterPro" id="IPR036876">
    <property type="entry name" value="UVR_dom_sf"/>
</dbReference>
<dbReference type="InterPro" id="IPR050066">
    <property type="entry name" value="UvrABC_protein_C"/>
</dbReference>
<dbReference type="InterPro" id="IPR004791">
    <property type="entry name" value="UvrC"/>
</dbReference>
<dbReference type="InterPro" id="IPR001162">
    <property type="entry name" value="UvrC_RNase_H_dom"/>
</dbReference>
<dbReference type="InterPro" id="IPR038476">
    <property type="entry name" value="UvrC_RNase_H_dom_sf"/>
</dbReference>
<dbReference type="NCBIfam" id="TIGR00194">
    <property type="entry name" value="uvrC"/>
    <property type="match status" value="1"/>
</dbReference>
<dbReference type="PANTHER" id="PTHR30562:SF1">
    <property type="entry name" value="UVRABC SYSTEM PROTEIN C"/>
    <property type="match status" value="1"/>
</dbReference>
<dbReference type="PANTHER" id="PTHR30562">
    <property type="entry name" value="UVRC/OXIDOREDUCTASE"/>
    <property type="match status" value="1"/>
</dbReference>
<dbReference type="Pfam" id="PF01541">
    <property type="entry name" value="GIY-YIG"/>
    <property type="match status" value="1"/>
</dbReference>
<dbReference type="Pfam" id="PF14520">
    <property type="entry name" value="HHH_5"/>
    <property type="match status" value="1"/>
</dbReference>
<dbReference type="Pfam" id="PF08459">
    <property type="entry name" value="UvrC_RNaseH_dom"/>
    <property type="match status" value="1"/>
</dbReference>
<dbReference type="SMART" id="SM00465">
    <property type="entry name" value="GIYc"/>
    <property type="match status" value="1"/>
</dbReference>
<dbReference type="SUPFAM" id="SSF46600">
    <property type="entry name" value="C-terminal UvrC-binding domain of UvrB"/>
    <property type="match status" value="1"/>
</dbReference>
<dbReference type="SUPFAM" id="SSF82771">
    <property type="entry name" value="GIY-YIG endonuclease"/>
    <property type="match status" value="1"/>
</dbReference>
<dbReference type="SUPFAM" id="SSF47781">
    <property type="entry name" value="RuvA domain 2-like"/>
    <property type="match status" value="1"/>
</dbReference>
<dbReference type="PROSITE" id="PS50164">
    <property type="entry name" value="GIY_YIG"/>
    <property type="match status" value="1"/>
</dbReference>
<dbReference type="PROSITE" id="PS50151">
    <property type="entry name" value="UVR"/>
    <property type="match status" value="1"/>
</dbReference>
<dbReference type="PROSITE" id="PS50165">
    <property type="entry name" value="UVRC"/>
    <property type="match status" value="1"/>
</dbReference>
<sequence length="574" mass="66987">MIDRSILNNIPKKPGVYIFKNNKGDPIYIGKAKNLKNRVSSYFNKKNYIGNEKTYEMLEKATNLDYIITSNENQAFILEANLIYIHKPKYNIMLKDTRVYPYILVTDEQFPKIKYIRTKKEEKGKFYGPYSDVKFVKDVIEVLQSVYKIRSCDRDLGRKSKPCFLYHLGRCYGPCYKDVDETVYQESVEKVKKVLSGDIEEVKNYLQKAMMDYAKIKNYEKAAQMRDTLFKLENLFEEVAVEYKNGKNLDIIMYEPPVYLVLIVRKGYLISKLSFTMEGTLEDFLYQYYIVRKNEPPSLISTLYNEEISPEILDFLKEKGLKRIEKIGKSSKIYEMAYTNLQEEIKRQKDLSFALKQAKEILSLKKEPKIIEGIDISHLQGLYTVASLVRFENGKPKKEGYRKYRLDDIKAPDDFESIRTVIKRRYQKHELPDLLFIDGGKGQVNSAVEALKEIGYSLKDVDVVGIAKEDERIVFPGDIPDLHLPLDHPVLRLLIYVRDETHRFAIGFNRSLRSKRFEKTKLDDIYGIGPKRKKELIKHFGGIQKLLEASIEEISKVVKSEKIAKRIKESLGEK</sequence>
<protein>
    <recommendedName>
        <fullName evidence="1">UvrABC system protein C</fullName>
        <shortName evidence="1">Protein UvrC</shortName>
    </recommendedName>
    <alternativeName>
        <fullName evidence="1">Excinuclease ABC subunit C</fullName>
    </alternativeName>
</protein>
<reference key="1">
    <citation type="submission" date="2007-11" db="EMBL/GenBank/DDBJ databases">
        <title>Complete sequence of Petroga mobilis SJ95.</title>
        <authorList>
            <consortium name="US DOE Joint Genome Institute"/>
            <person name="Copeland A."/>
            <person name="Lucas S."/>
            <person name="Lapidus A."/>
            <person name="Barry K."/>
            <person name="Glavina del Rio T."/>
            <person name="Dalin E."/>
            <person name="Tice H."/>
            <person name="Pitluck S."/>
            <person name="Meincke L."/>
            <person name="Brettin T."/>
            <person name="Bruce D."/>
            <person name="Detter J.C."/>
            <person name="Han C."/>
            <person name="Kuske C.R."/>
            <person name="Schmutz J."/>
            <person name="Larimer F."/>
            <person name="Land M."/>
            <person name="Hauser L."/>
            <person name="Kyrpides N."/>
            <person name="Mikhailova N."/>
            <person name="Noll K."/>
            <person name="Richardson P."/>
        </authorList>
    </citation>
    <scope>NUCLEOTIDE SEQUENCE [LARGE SCALE GENOMIC DNA]</scope>
    <source>
        <strain>DSM 10674 / SJ95</strain>
    </source>
</reference>
<comment type="function">
    <text evidence="1">The UvrABC repair system catalyzes the recognition and processing of DNA lesions. UvrC both incises the 5' and 3' sides of the lesion. The N-terminal half is responsible for the 3' incision and the C-terminal half is responsible for the 5' incision.</text>
</comment>
<comment type="subunit">
    <text evidence="1">Interacts with UvrB in an incision complex.</text>
</comment>
<comment type="subcellular location">
    <subcellularLocation>
        <location evidence="1">Cytoplasm</location>
    </subcellularLocation>
</comment>
<comment type="similarity">
    <text evidence="1">Belongs to the UvrC family.</text>
</comment>
<name>UVRC_PETMO</name>
<proteinExistence type="inferred from homology"/>
<keyword id="KW-0963">Cytoplasm</keyword>
<keyword id="KW-0227">DNA damage</keyword>
<keyword id="KW-0228">DNA excision</keyword>
<keyword id="KW-0234">DNA repair</keyword>
<keyword id="KW-0267">Excision nuclease</keyword>
<keyword id="KW-0742">SOS response</keyword>
<evidence type="ECO:0000255" key="1">
    <source>
        <dbReference type="HAMAP-Rule" id="MF_00203"/>
    </source>
</evidence>
<gene>
    <name evidence="1" type="primary">uvrC</name>
    <name type="ordered locus">Pmob_1854</name>
</gene>
<organism>
    <name type="scientific">Petrotoga mobilis (strain DSM 10674 / SJ95)</name>
    <dbReference type="NCBI Taxonomy" id="403833"/>
    <lineage>
        <taxon>Bacteria</taxon>
        <taxon>Thermotogati</taxon>
        <taxon>Thermotogota</taxon>
        <taxon>Thermotogae</taxon>
        <taxon>Petrotogales</taxon>
        <taxon>Petrotogaceae</taxon>
        <taxon>Petrotoga</taxon>
    </lineage>
</organism>
<accession>A9BGW2</accession>